<name>MIAA_PICP2</name>
<gene>
    <name evidence="1" type="primary">miaA</name>
    <name type="ordered locus">SYNPCC7002_A1195</name>
</gene>
<accession>B1XKE8</accession>
<evidence type="ECO:0000255" key="1">
    <source>
        <dbReference type="HAMAP-Rule" id="MF_00185"/>
    </source>
</evidence>
<reference key="1">
    <citation type="submission" date="2008-02" db="EMBL/GenBank/DDBJ databases">
        <title>Complete sequence of Synechococcus sp. PCC 7002.</title>
        <authorList>
            <person name="Li T."/>
            <person name="Zhao J."/>
            <person name="Zhao C."/>
            <person name="Liu Z."/>
            <person name="Zhao F."/>
            <person name="Marquardt J."/>
            <person name="Nomura C.T."/>
            <person name="Persson S."/>
            <person name="Detter J.C."/>
            <person name="Richardson P.M."/>
            <person name="Lanz C."/>
            <person name="Schuster S.C."/>
            <person name="Wang J."/>
            <person name="Li S."/>
            <person name="Huang X."/>
            <person name="Cai T."/>
            <person name="Yu Z."/>
            <person name="Luo J."/>
            <person name="Zhao J."/>
            <person name="Bryant D.A."/>
        </authorList>
    </citation>
    <scope>NUCLEOTIDE SEQUENCE [LARGE SCALE GENOMIC DNA]</scope>
    <source>
        <strain>ATCC 27264 / PCC 7002 / PR-6</strain>
    </source>
</reference>
<organism>
    <name type="scientific">Picosynechococcus sp. (strain ATCC 27264 / PCC 7002 / PR-6)</name>
    <name type="common">Agmenellum quadruplicatum</name>
    <dbReference type="NCBI Taxonomy" id="32049"/>
    <lineage>
        <taxon>Bacteria</taxon>
        <taxon>Bacillati</taxon>
        <taxon>Cyanobacteriota</taxon>
        <taxon>Cyanophyceae</taxon>
        <taxon>Oscillatoriophycideae</taxon>
        <taxon>Chroococcales</taxon>
        <taxon>Geminocystaceae</taxon>
        <taxon>Picosynechococcus</taxon>
    </lineage>
</organism>
<comment type="function">
    <text evidence="1">Catalyzes the transfer of a dimethylallyl group onto the adenine at position 37 in tRNAs that read codons beginning with uridine, leading to the formation of N6-(dimethylallyl)adenosine (i(6)A).</text>
</comment>
<comment type="catalytic activity">
    <reaction evidence="1">
        <text>adenosine(37) in tRNA + dimethylallyl diphosphate = N(6)-dimethylallyladenosine(37) in tRNA + diphosphate</text>
        <dbReference type="Rhea" id="RHEA:26482"/>
        <dbReference type="Rhea" id="RHEA-COMP:10162"/>
        <dbReference type="Rhea" id="RHEA-COMP:10375"/>
        <dbReference type="ChEBI" id="CHEBI:33019"/>
        <dbReference type="ChEBI" id="CHEBI:57623"/>
        <dbReference type="ChEBI" id="CHEBI:74411"/>
        <dbReference type="ChEBI" id="CHEBI:74415"/>
        <dbReference type="EC" id="2.5.1.75"/>
    </reaction>
</comment>
<comment type="cofactor">
    <cofactor evidence="1">
        <name>Mg(2+)</name>
        <dbReference type="ChEBI" id="CHEBI:18420"/>
    </cofactor>
</comment>
<comment type="subunit">
    <text evidence="1">Monomer.</text>
</comment>
<comment type="similarity">
    <text evidence="1">Belongs to the IPP transferase family.</text>
</comment>
<sequence length="298" mass="33394">MTAPLIVICGATATGKSGLALKLAEKLDAVILSADSRQIYKEFDIGTAKPTPAEQQSIPHYLIDICEPTETLTLAEYQAQAQALIAQFHAEQKPVLLVGGTGLYIKAITKGLKIPRVAPQPDLRQQFTDLGQAYSYQLLRQVDPEVCQKIHPNDQVRTLRALEVFYVTGEPISSQQGENSPTYSILEIGLDCAPDHLDQRIRQRTQQMVDQGFVAEVERLGKKYGWDLPLLNTLGYAEFRDYVRGQGTLEEAIANTVLHTRQFAKRQRTWFRANPDIHWLDNTAPDLLEQALNLITQQ</sequence>
<dbReference type="EC" id="2.5.1.75" evidence="1"/>
<dbReference type="EMBL" id="CP000951">
    <property type="protein sequence ID" value="ACA99194.1"/>
    <property type="molecule type" value="Genomic_DNA"/>
</dbReference>
<dbReference type="RefSeq" id="WP_012306817.1">
    <property type="nucleotide sequence ID" value="NZ_JAHHPU010000001.1"/>
</dbReference>
<dbReference type="SMR" id="B1XKE8"/>
<dbReference type="STRING" id="32049.SYNPCC7002_A1195"/>
<dbReference type="KEGG" id="syp:SYNPCC7002_A1195"/>
<dbReference type="eggNOG" id="COG0324">
    <property type="taxonomic scope" value="Bacteria"/>
</dbReference>
<dbReference type="HOGENOM" id="CLU_032616_0_1_3"/>
<dbReference type="Proteomes" id="UP000001688">
    <property type="component" value="Chromosome"/>
</dbReference>
<dbReference type="GO" id="GO:0005524">
    <property type="term" value="F:ATP binding"/>
    <property type="evidence" value="ECO:0007669"/>
    <property type="project" value="UniProtKB-UniRule"/>
</dbReference>
<dbReference type="GO" id="GO:0052381">
    <property type="term" value="F:tRNA dimethylallyltransferase activity"/>
    <property type="evidence" value="ECO:0007669"/>
    <property type="project" value="UniProtKB-UniRule"/>
</dbReference>
<dbReference type="GO" id="GO:0006400">
    <property type="term" value="P:tRNA modification"/>
    <property type="evidence" value="ECO:0007669"/>
    <property type="project" value="TreeGrafter"/>
</dbReference>
<dbReference type="Gene3D" id="1.10.20.140">
    <property type="match status" value="1"/>
</dbReference>
<dbReference type="Gene3D" id="3.40.50.300">
    <property type="entry name" value="P-loop containing nucleotide triphosphate hydrolases"/>
    <property type="match status" value="1"/>
</dbReference>
<dbReference type="HAMAP" id="MF_00185">
    <property type="entry name" value="IPP_trans"/>
    <property type="match status" value="1"/>
</dbReference>
<dbReference type="InterPro" id="IPR039657">
    <property type="entry name" value="Dimethylallyltransferase"/>
</dbReference>
<dbReference type="InterPro" id="IPR018022">
    <property type="entry name" value="IPT"/>
</dbReference>
<dbReference type="InterPro" id="IPR027417">
    <property type="entry name" value="P-loop_NTPase"/>
</dbReference>
<dbReference type="NCBIfam" id="TIGR00174">
    <property type="entry name" value="miaA"/>
    <property type="match status" value="1"/>
</dbReference>
<dbReference type="PANTHER" id="PTHR11088">
    <property type="entry name" value="TRNA DIMETHYLALLYLTRANSFERASE"/>
    <property type="match status" value="1"/>
</dbReference>
<dbReference type="PANTHER" id="PTHR11088:SF60">
    <property type="entry name" value="TRNA DIMETHYLALLYLTRANSFERASE"/>
    <property type="match status" value="1"/>
</dbReference>
<dbReference type="Pfam" id="PF01715">
    <property type="entry name" value="IPPT"/>
    <property type="match status" value="1"/>
</dbReference>
<dbReference type="SUPFAM" id="SSF52540">
    <property type="entry name" value="P-loop containing nucleoside triphosphate hydrolases"/>
    <property type="match status" value="1"/>
</dbReference>
<keyword id="KW-0067">ATP-binding</keyword>
<keyword id="KW-0460">Magnesium</keyword>
<keyword id="KW-0547">Nucleotide-binding</keyword>
<keyword id="KW-1185">Reference proteome</keyword>
<keyword id="KW-0808">Transferase</keyword>
<keyword id="KW-0819">tRNA processing</keyword>
<proteinExistence type="inferred from homology"/>
<protein>
    <recommendedName>
        <fullName evidence="1">tRNA dimethylallyltransferase</fullName>
        <ecNumber evidence="1">2.5.1.75</ecNumber>
    </recommendedName>
    <alternativeName>
        <fullName evidence="1">Dimethylallyl diphosphate:tRNA dimethylallyltransferase</fullName>
        <shortName evidence="1">DMAPP:tRNA dimethylallyltransferase</shortName>
        <shortName evidence="1">DMATase</shortName>
    </alternativeName>
    <alternativeName>
        <fullName evidence="1">Isopentenyl-diphosphate:tRNA isopentenyltransferase</fullName>
        <shortName evidence="1">IPP transferase</shortName>
        <shortName evidence="1">IPPT</shortName>
        <shortName evidence="1">IPTase</shortName>
    </alternativeName>
</protein>
<feature type="chain" id="PRO_0000377343" description="tRNA dimethylallyltransferase">
    <location>
        <begin position="1"/>
        <end position="298"/>
    </location>
</feature>
<feature type="region of interest" description="Interaction with substrate tRNA" evidence="1">
    <location>
        <begin position="35"/>
        <end position="38"/>
    </location>
</feature>
<feature type="binding site" evidence="1">
    <location>
        <begin position="10"/>
        <end position="17"/>
    </location>
    <ligand>
        <name>ATP</name>
        <dbReference type="ChEBI" id="CHEBI:30616"/>
    </ligand>
</feature>
<feature type="binding site" evidence="1">
    <location>
        <begin position="12"/>
        <end position="17"/>
    </location>
    <ligand>
        <name>substrate</name>
    </ligand>
</feature>
<feature type="site" description="Interaction with substrate tRNA" evidence="1">
    <location>
        <position position="101"/>
    </location>
</feature>